<feature type="chain" id="PRO_0000118113" description="NADH-ubiquinone oxidoreductase chain 5">
    <location>
        <begin position="1"/>
        <end position="600"/>
    </location>
</feature>
<feature type="transmembrane region" description="Helical" evidence="2">
    <location>
        <begin position="1"/>
        <end position="21"/>
    </location>
</feature>
<feature type="transmembrane region" description="Helical" evidence="2">
    <location>
        <begin position="27"/>
        <end position="47"/>
    </location>
</feature>
<feature type="transmembrane region" description="Helical" evidence="2">
    <location>
        <begin position="81"/>
        <end position="101"/>
    </location>
</feature>
<feature type="transmembrane region" description="Helical" evidence="2">
    <location>
        <begin position="110"/>
        <end position="130"/>
    </location>
</feature>
<feature type="transmembrane region" description="Helical" evidence="2">
    <location>
        <begin position="136"/>
        <end position="156"/>
    </location>
</feature>
<feature type="transmembrane region" description="Helical" evidence="2">
    <location>
        <begin position="178"/>
        <end position="198"/>
    </location>
</feature>
<feature type="transmembrane region" description="Helical" evidence="2">
    <location>
        <begin position="200"/>
        <end position="220"/>
    </location>
</feature>
<feature type="transmembrane region" description="Helical" evidence="2">
    <location>
        <begin position="241"/>
        <end position="261"/>
    </location>
</feature>
<feature type="transmembrane region" description="Helical" evidence="2">
    <location>
        <begin position="274"/>
        <end position="294"/>
    </location>
</feature>
<feature type="transmembrane region" description="Helical" evidence="2">
    <location>
        <begin position="301"/>
        <end position="323"/>
    </location>
</feature>
<feature type="transmembrane region" description="Helical" evidence="2">
    <location>
        <begin position="327"/>
        <end position="347"/>
    </location>
</feature>
<feature type="transmembrane region" description="Helical" evidence="2">
    <location>
        <begin position="366"/>
        <end position="386"/>
    </location>
</feature>
<feature type="transmembrane region" description="Helical" evidence="2">
    <location>
        <begin position="404"/>
        <end position="424"/>
    </location>
</feature>
<feature type="transmembrane region" description="Helical" evidence="2">
    <location>
        <begin position="450"/>
        <end position="470"/>
    </location>
</feature>
<feature type="transmembrane region" description="Helical" evidence="2">
    <location>
        <begin position="488"/>
        <end position="508"/>
    </location>
</feature>
<feature type="transmembrane region" description="Helical" evidence="2">
    <location>
        <begin position="520"/>
        <end position="540"/>
    </location>
</feature>
<geneLocation type="mitochondrion"/>
<proteinExistence type="inferred from homology"/>
<dbReference type="EC" id="7.1.1.2"/>
<dbReference type="EMBL" id="U36784">
    <property type="protein sequence ID" value="AAC47102.1"/>
    <property type="molecule type" value="Genomic_DNA"/>
</dbReference>
<dbReference type="EMBL" id="AF000023">
    <property type="protein sequence ID" value="AAC04635.1"/>
    <property type="molecule type" value="Genomic_DNA"/>
</dbReference>
<dbReference type="PIR" id="T11889">
    <property type="entry name" value="T11889"/>
</dbReference>
<dbReference type="RefSeq" id="NP_009258.1">
    <property type="nucleotide sequence ID" value="NC_000933.1"/>
</dbReference>
<dbReference type="SMR" id="Q35099"/>
<dbReference type="GeneID" id="808773"/>
<dbReference type="CTD" id="4540"/>
<dbReference type="GO" id="GO:0005743">
    <property type="term" value="C:mitochondrial inner membrane"/>
    <property type="evidence" value="ECO:0007669"/>
    <property type="project" value="UniProtKB-SubCell"/>
</dbReference>
<dbReference type="GO" id="GO:0008137">
    <property type="term" value="F:NADH dehydrogenase (ubiquinone) activity"/>
    <property type="evidence" value="ECO:0007669"/>
    <property type="project" value="UniProtKB-EC"/>
</dbReference>
<dbReference type="GO" id="GO:0042773">
    <property type="term" value="P:ATP synthesis coupled electron transport"/>
    <property type="evidence" value="ECO:0007669"/>
    <property type="project" value="InterPro"/>
</dbReference>
<dbReference type="GO" id="GO:0015990">
    <property type="term" value="P:electron transport coupled proton transport"/>
    <property type="evidence" value="ECO:0007669"/>
    <property type="project" value="TreeGrafter"/>
</dbReference>
<dbReference type="Gene3D" id="1.20.5.2700">
    <property type="match status" value="1"/>
</dbReference>
<dbReference type="InterPro" id="IPR010934">
    <property type="entry name" value="NADH_DH_su5_C"/>
</dbReference>
<dbReference type="InterPro" id="IPR018393">
    <property type="entry name" value="NADHpl_OxRdtase_5_subgr"/>
</dbReference>
<dbReference type="InterPro" id="IPR001750">
    <property type="entry name" value="ND/Mrp_TM"/>
</dbReference>
<dbReference type="InterPro" id="IPR003945">
    <property type="entry name" value="NU5C-like"/>
</dbReference>
<dbReference type="InterPro" id="IPR001516">
    <property type="entry name" value="Proton_antipo_N"/>
</dbReference>
<dbReference type="NCBIfam" id="TIGR01974">
    <property type="entry name" value="NDH_I_L"/>
    <property type="match status" value="1"/>
</dbReference>
<dbReference type="NCBIfam" id="NF005141">
    <property type="entry name" value="PRK06590.1"/>
    <property type="match status" value="1"/>
</dbReference>
<dbReference type="PANTHER" id="PTHR42829">
    <property type="entry name" value="NADH-UBIQUINONE OXIDOREDUCTASE CHAIN 5"/>
    <property type="match status" value="1"/>
</dbReference>
<dbReference type="PANTHER" id="PTHR42829:SF2">
    <property type="entry name" value="NADH-UBIQUINONE OXIDOREDUCTASE CHAIN 5"/>
    <property type="match status" value="1"/>
</dbReference>
<dbReference type="Pfam" id="PF06455">
    <property type="entry name" value="NADH5_C"/>
    <property type="match status" value="1"/>
</dbReference>
<dbReference type="Pfam" id="PF00361">
    <property type="entry name" value="Proton_antipo_M"/>
    <property type="match status" value="1"/>
</dbReference>
<dbReference type="Pfam" id="PF00662">
    <property type="entry name" value="Proton_antipo_N"/>
    <property type="match status" value="1"/>
</dbReference>
<dbReference type="PRINTS" id="PR01434">
    <property type="entry name" value="NADHDHGNASE5"/>
</dbReference>
<dbReference type="PRINTS" id="PR01435">
    <property type="entry name" value="NPOXDRDTASE5"/>
</dbReference>
<comment type="function">
    <text evidence="1">Core subunit of the mitochondrial membrane respiratory chain NADH dehydrogenase (Complex I) that is believed to belong to the minimal assembly required for catalysis. Complex I functions in the transfer of electrons from NADH to the respiratory chain. The immediate electron acceptor for the enzyme is believed to be ubiquinone (By similarity).</text>
</comment>
<comment type="catalytic activity">
    <reaction>
        <text>a ubiquinone + NADH + 5 H(+)(in) = a ubiquinol + NAD(+) + 4 H(+)(out)</text>
        <dbReference type="Rhea" id="RHEA:29091"/>
        <dbReference type="Rhea" id="RHEA-COMP:9565"/>
        <dbReference type="Rhea" id="RHEA-COMP:9566"/>
        <dbReference type="ChEBI" id="CHEBI:15378"/>
        <dbReference type="ChEBI" id="CHEBI:16389"/>
        <dbReference type="ChEBI" id="CHEBI:17976"/>
        <dbReference type="ChEBI" id="CHEBI:57540"/>
        <dbReference type="ChEBI" id="CHEBI:57945"/>
        <dbReference type="EC" id="7.1.1.2"/>
    </reaction>
</comment>
<comment type="subcellular location">
    <subcellularLocation>
        <location evidence="1">Mitochondrion inner membrane</location>
        <topology evidence="1">Multi-pass membrane protein</topology>
    </subcellularLocation>
</comment>
<comment type="similarity">
    <text evidence="3">Belongs to the complex I subunit 5 family.</text>
</comment>
<sequence length="600" mass="66448">MYILVLTVPLLGALVSGLFGRKIGEKGAGIFTSGCLIISLSWSLLIFYETTLNFSTTYIKLWRWLDSDLVTAYFGLQFDSLTAVMLIVVTSISTLVHIFSTAYMDGDPHVPRFMSYLSLFTFFMILLVTSDNYPQLFIGWEGVGLCSYLLINFWLTRIEANKAAIKAMLVNRVGDIGFVLAMLAIWDQFGCLDFASVFNIVALAPSDNTTLICLFLFIGAVGKSAQLGLHTWLPDAMEGPTPVSALIHAATMVTAGVFLLIRSSPLLEQAPMALMVVTIVGSLTAFMAATIGLVQNDLKKVIAYSTCSQLGYMVMACGLSQYSISLFHLMNHAFFKALLFLSAGSVIHALADEQDMRKMGGLIRSIPFTYTMIVIGSLSLMGFPYLTGFYSKDLILELAYDQYYLAFAHWLGVFSALLTAAYSLRLIYLTFISNTNAKKEVFSQAHEGSWNLTLPLILLALGSIFVGYLTKEIIWSFQITLSPIIPTSIKLMPVIFSLFGAGTAVVLYHYSSRIFNAPTSPVGLAGYTFLYSAWQFNYIINHFLVQNVWRLGHLITFRVLDKGVLELIGPKGISQFMIRLTQEISNLQSGLVYNYALMIL</sequence>
<name>NU5M_METSE</name>
<reference key="1">
    <citation type="journal article" date="1996" name="Proc. Natl. Acad. Sci. U.S.A.">
        <title>Two mitochondrial group I introns in a metazoan, the sea anemone Metridium senile: one intron contains genes for subunits 1 and 3 of NADH dehydrogenase.</title>
        <authorList>
            <person name="Beagley C.T."/>
            <person name="Okada N.A."/>
            <person name="Wolstenholme D.R."/>
        </authorList>
    </citation>
    <scope>NUCLEOTIDE SEQUENCE [GENOMIC DNA]</scope>
    <source>
        <strain>White morph</strain>
    </source>
</reference>
<reference key="2">
    <citation type="submission" date="1997-04" db="EMBL/GenBank/DDBJ databases">
        <authorList>
            <person name="Beagley C.T."/>
            <person name="Okimoto R."/>
            <person name="Wolstenholme D.R."/>
        </authorList>
    </citation>
    <scope>NUCLEOTIDE SEQUENCE [GENOMIC DNA]</scope>
    <source>
        <strain>White morph</strain>
    </source>
</reference>
<accession>Q35099</accession>
<evidence type="ECO:0000250" key="1"/>
<evidence type="ECO:0000255" key="2"/>
<evidence type="ECO:0000305" key="3"/>
<keyword id="KW-0249">Electron transport</keyword>
<keyword id="KW-0472">Membrane</keyword>
<keyword id="KW-0496">Mitochondrion</keyword>
<keyword id="KW-0999">Mitochondrion inner membrane</keyword>
<keyword id="KW-0520">NAD</keyword>
<keyword id="KW-0679">Respiratory chain</keyword>
<keyword id="KW-1278">Translocase</keyword>
<keyword id="KW-0812">Transmembrane</keyword>
<keyword id="KW-1133">Transmembrane helix</keyword>
<keyword id="KW-0813">Transport</keyword>
<keyword id="KW-0830">Ubiquinone</keyword>
<gene>
    <name type="primary">ND5</name>
</gene>
<protein>
    <recommendedName>
        <fullName>NADH-ubiquinone oxidoreductase chain 5</fullName>
        <ecNumber>7.1.1.2</ecNumber>
    </recommendedName>
    <alternativeName>
        <fullName>NADH dehydrogenase subunit 5</fullName>
    </alternativeName>
</protein>
<organism>
    <name type="scientific">Metridium senile</name>
    <name type="common">Brown sea anemone</name>
    <name type="synonym">Frilled sea anemone</name>
    <dbReference type="NCBI Taxonomy" id="6116"/>
    <lineage>
        <taxon>Eukaryota</taxon>
        <taxon>Metazoa</taxon>
        <taxon>Cnidaria</taxon>
        <taxon>Anthozoa</taxon>
        <taxon>Hexacorallia</taxon>
        <taxon>Actiniaria</taxon>
        <taxon>Nynantheae</taxon>
        <taxon>Metridiidae</taxon>
        <taxon>Metridium</taxon>
    </lineage>
</organism>